<name>MNMG_PROM1</name>
<protein>
    <recommendedName>
        <fullName evidence="1">tRNA uridine 5-carboxymethylaminomethyl modification enzyme MnmG</fullName>
    </recommendedName>
    <alternativeName>
        <fullName evidence="1">Glucose-inhibited division protein A</fullName>
    </alternativeName>
</protein>
<reference key="1">
    <citation type="journal article" date="2007" name="PLoS Genet.">
        <title>Patterns and implications of gene gain and loss in the evolution of Prochlorococcus.</title>
        <authorList>
            <person name="Kettler G.C."/>
            <person name="Martiny A.C."/>
            <person name="Huang K."/>
            <person name="Zucker J."/>
            <person name="Coleman M.L."/>
            <person name="Rodrigue S."/>
            <person name="Chen F."/>
            <person name="Lapidus A."/>
            <person name="Ferriera S."/>
            <person name="Johnson J."/>
            <person name="Steglich C."/>
            <person name="Church G.M."/>
            <person name="Richardson P."/>
            <person name="Chisholm S.W."/>
        </authorList>
    </citation>
    <scope>NUCLEOTIDE SEQUENCE [LARGE SCALE GENOMIC DNA]</scope>
    <source>
        <strain>NATL1A</strain>
    </source>
</reference>
<accession>A2C5E1</accession>
<feature type="chain" id="PRO_1000016636" description="tRNA uridine 5-carboxymethylaminomethyl modification enzyme MnmG">
    <location>
        <begin position="1"/>
        <end position="656"/>
    </location>
</feature>
<feature type="binding site" evidence="1">
    <location>
        <begin position="17"/>
        <end position="22"/>
    </location>
    <ligand>
        <name>FAD</name>
        <dbReference type="ChEBI" id="CHEBI:57692"/>
    </ligand>
</feature>
<feature type="binding site" evidence="1">
    <location>
        <position position="129"/>
    </location>
    <ligand>
        <name>FAD</name>
        <dbReference type="ChEBI" id="CHEBI:57692"/>
    </ligand>
</feature>
<feature type="binding site" evidence="1">
    <location>
        <position position="200"/>
    </location>
    <ligand>
        <name>FAD</name>
        <dbReference type="ChEBI" id="CHEBI:57692"/>
    </ligand>
</feature>
<feature type="binding site" evidence="1">
    <location>
        <begin position="293"/>
        <end position="307"/>
    </location>
    <ligand>
        <name>NAD(+)</name>
        <dbReference type="ChEBI" id="CHEBI:57540"/>
    </ligand>
</feature>
<feature type="binding site" evidence="1">
    <location>
        <position position="390"/>
    </location>
    <ligand>
        <name>FAD</name>
        <dbReference type="ChEBI" id="CHEBI:57692"/>
    </ligand>
</feature>
<proteinExistence type="inferred from homology"/>
<evidence type="ECO:0000255" key="1">
    <source>
        <dbReference type="HAMAP-Rule" id="MF_00129"/>
    </source>
</evidence>
<sequence>MITKQSSNESFDVIVVGGGHAGCEAALTSARLGLNTALFTLNLDRIAWQPCNPAVGGPAKSQLVHEVDALGGIIGKLADLTALQKRVLNASRGPAVRALRAQTDKRSYAHEMLKILQNTPNLKIREAMVTGLEIEHYPNQIDQKTPEIQERIGFIKGIKTYFGSVFHAKAVVLTTGTFLGGRIWIGNQSMSAGRAGEQASEGLTEELKKLGFTTDRLKTGTPARVDRRTIDLDSLDEQLSDASDKFFSFDPLSWKSGEQMSCHITRTTKETHQLIKNNLHLTPIYGGFIDSKGPRYCPSIEDKIVRFADKDSHQIFLEPEGRDTPEMYVQGFSTGLPENLQLELLRTLPGLQNCVMLRPAYAVEYDYIPATQLEATLETKRISGLYSAGQLNGTTGYEEAAAQGLVAGLNAARLVNNKEGIIFERESSYIGTMIDDLVTKDLKEPYRVLTSRSEYRLILRGDNADRRLTPLGYQLGLIDERRWNIFNAKQQLINQEKERLDKERIKESDKCAKEIFSSTGTPIKGSLTLANFLRRTNIHYKDLITYNLTTQSIPLDVEEAVEIDIKYSGYLERQKAQINQLKQQSKKLLPKNLNYNNIETLSKEAREKLTISQPKSLGHAAQVPGVSKADLTALLVWLKIEKMKKVKRKDSLQITN</sequence>
<dbReference type="EMBL" id="CP000553">
    <property type="protein sequence ID" value="ABM76701.1"/>
    <property type="molecule type" value="Genomic_DNA"/>
</dbReference>
<dbReference type="RefSeq" id="WP_011824639.1">
    <property type="nucleotide sequence ID" value="NC_008819.1"/>
</dbReference>
<dbReference type="SMR" id="A2C5E1"/>
<dbReference type="KEGG" id="pme:NATL1_21451"/>
<dbReference type="eggNOG" id="COG0445">
    <property type="taxonomic scope" value="Bacteria"/>
</dbReference>
<dbReference type="HOGENOM" id="CLU_007831_2_2_3"/>
<dbReference type="Proteomes" id="UP000002592">
    <property type="component" value="Chromosome"/>
</dbReference>
<dbReference type="GO" id="GO:0005737">
    <property type="term" value="C:cytoplasm"/>
    <property type="evidence" value="ECO:0007669"/>
    <property type="project" value="UniProtKB-SubCell"/>
</dbReference>
<dbReference type="GO" id="GO:0050660">
    <property type="term" value="F:flavin adenine dinucleotide binding"/>
    <property type="evidence" value="ECO:0007669"/>
    <property type="project" value="UniProtKB-UniRule"/>
</dbReference>
<dbReference type="GO" id="GO:0030488">
    <property type="term" value="P:tRNA methylation"/>
    <property type="evidence" value="ECO:0007669"/>
    <property type="project" value="TreeGrafter"/>
</dbReference>
<dbReference type="GO" id="GO:0002098">
    <property type="term" value="P:tRNA wobble uridine modification"/>
    <property type="evidence" value="ECO:0007669"/>
    <property type="project" value="InterPro"/>
</dbReference>
<dbReference type="FunFam" id="1.10.10.1800:FF:000001">
    <property type="entry name" value="tRNA uridine 5-carboxymethylaminomethyl modification enzyme MnmG"/>
    <property type="match status" value="1"/>
</dbReference>
<dbReference type="FunFam" id="1.10.150.570:FF:000001">
    <property type="entry name" value="tRNA uridine 5-carboxymethylaminomethyl modification enzyme MnmG"/>
    <property type="match status" value="1"/>
</dbReference>
<dbReference type="FunFam" id="3.50.50.60:FF:000094">
    <property type="entry name" value="tRNA uridine 5-carboxymethylaminomethyl modification enzyme MnmG"/>
    <property type="match status" value="1"/>
</dbReference>
<dbReference type="FunFam" id="3.50.50.60:FF:000119">
    <property type="entry name" value="tRNA uridine 5-carboxymethylaminomethyl modification enzyme MnmG"/>
    <property type="match status" value="1"/>
</dbReference>
<dbReference type="Gene3D" id="3.50.50.60">
    <property type="entry name" value="FAD/NAD(P)-binding domain"/>
    <property type="match status" value="2"/>
</dbReference>
<dbReference type="Gene3D" id="1.10.150.570">
    <property type="entry name" value="GidA associated domain, C-terminal subdomain"/>
    <property type="match status" value="1"/>
</dbReference>
<dbReference type="Gene3D" id="1.10.10.1800">
    <property type="entry name" value="tRNA uridine 5-carboxymethylaminomethyl modification enzyme MnmG/GidA"/>
    <property type="match status" value="1"/>
</dbReference>
<dbReference type="HAMAP" id="MF_00129">
    <property type="entry name" value="MnmG_GidA"/>
    <property type="match status" value="1"/>
</dbReference>
<dbReference type="InterPro" id="IPR036188">
    <property type="entry name" value="FAD/NAD-bd_sf"/>
</dbReference>
<dbReference type="InterPro" id="IPR049312">
    <property type="entry name" value="GIDA_C_N"/>
</dbReference>
<dbReference type="InterPro" id="IPR004416">
    <property type="entry name" value="MnmG"/>
</dbReference>
<dbReference type="InterPro" id="IPR002218">
    <property type="entry name" value="MnmG-rel"/>
</dbReference>
<dbReference type="InterPro" id="IPR020595">
    <property type="entry name" value="MnmG-rel_CS"/>
</dbReference>
<dbReference type="InterPro" id="IPR026904">
    <property type="entry name" value="MnmG_C"/>
</dbReference>
<dbReference type="InterPro" id="IPR047001">
    <property type="entry name" value="MnmG_C_subdom"/>
</dbReference>
<dbReference type="InterPro" id="IPR044920">
    <property type="entry name" value="MnmG_C_subdom_sf"/>
</dbReference>
<dbReference type="InterPro" id="IPR040131">
    <property type="entry name" value="MnmG_N"/>
</dbReference>
<dbReference type="NCBIfam" id="TIGR00136">
    <property type="entry name" value="mnmG_gidA"/>
    <property type="match status" value="1"/>
</dbReference>
<dbReference type="PANTHER" id="PTHR11806">
    <property type="entry name" value="GLUCOSE INHIBITED DIVISION PROTEIN A"/>
    <property type="match status" value="1"/>
</dbReference>
<dbReference type="PANTHER" id="PTHR11806:SF0">
    <property type="entry name" value="PROTEIN MTO1 HOMOLOG, MITOCHONDRIAL"/>
    <property type="match status" value="1"/>
</dbReference>
<dbReference type="Pfam" id="PF01134">
    <property type="entry name" value="GIDA"/>
    <property type="match status" value="1"/>
</dbReference>
<dbReference type="Pfam" id="PF21680">
    <property type="entry name" value="GIDA_C_1st"/>
    <property type="match status" value="1"/>
</dbReference>
<dbReference type="Pfam" id="PF13932">
    <property type="entry name" value="SAM_GIDA_C"/>
    <property type="match status" value="1"/>
</dbReference>
<dbReference type="SMART" id="SM01228">
    <property type="entry name" value="GIDA_assoc_3"/>
    <property type="match status" value="1"/>
</dbReference>
<dbReference type="SUPFAM" id="SSF51905">
    <property type="entry name" value="FAD/NAD(P)-binding domain"/>
    <property type="match status" value="1"/>
</dbReference>
<dbReference type="PROSITE" id="PS01280">
    <property type="entry name" value="GIDA_1"/>
    <property type="match status" value="1"/>
</dbReference>
<dbReference type="PROSITE" id="PS01281">
    <property type="entry name" value="GIDA_2"/>
    <property type="match status" value="1"/>
</dbReference>
<keyword id="KW-0963">Cytoplasm</keyword>
<keyword id="KW-0274">FAD</keyword>
<keyword id="KW-0285">Flavoprotein</keyword>
<keyword id="KW-0520">NAD</keyword>
<keyword id="KW-0819">tRNA processing</keyword>
<gene>
    <name evidence="1" type="primary">mnmG</name>
    <name evidence="1" type="synonym">gidA</name>
    <name type="ordered locus">NATL1_21451</name>
</gene>
<comment type="function">
    <text evidence="1">NAD-binding protein involved in the addition of a carboxymethylaminomethyl (cmnm) group at the wobble position (U34) of certain tRNAs, forming tRNA-cmnm(5)s(2)U34.</text>
</comment>
<comment type="cofactor">
    <cofactor evidence="1">
        <name>FAD</name>
        <dbReference type="ChEBI" id="CHEBI:57692"/>
    </cofactor>
</comment>
<comment type="subunit">
    <text evidence="1">Homodimer. Heterotetramer of two MnmE and two MnmG subunits.</text>
</comment>
<comment type="subcellular location">
    <subcellularLocation>
        <location evidence="1">Cytoplasm</location>
    </subcellularLocation>
</comment>
<comment type="similarity">
    <text evidence="1">Belongs to the MnmG family.</text>
</comment>
<organism>
    <name type="scientific">Prochlorococcus marinus (strain NATL1A)</name>
    <dbReference type="NCBI Taxonomy" id="167555"/>
    <lineage>
        <taxon>Bacteria</taxon>
        <taxon>Bacillati</taxon>
        <taxon>Cyanobacteriota</taxon>
        <taxon>Cyanophyceae</taxon>
        <taxon>Synechococcales</taxon>
        <taxon>Prochlorococcaceae</taxon>
        <taxon>Prochlorococcus</taxon>
    </lineage>
</organism>